<comment type="function">
    <text evidence="5">Chaperone that may play a role in mitochondrial protein folding. Involved in female gametophyte development. Required for cell death of the synergid cells during fertilization process, and fusion of the polar nuclei during megagametogenesis.</text>
</comment>
<comment type="subcellular location">
    <subcellularLocation>
        <location evidence="5">Mitochondrion</location>
    </subcellularLocation>
</comment>
<comment type="tissue specificity">
    <text evidence="5">Widely expressed.</text>
</comment>
<comment type="disruption phenotype">
    <text>Defect in fusion of polar nuclei and in synergid cell death.</text>
</comment>
<comment type="similarity">
    <text evidence="8">Belongs to the DnaJ family.</text>
</comment>
<comment type="sequence caution" evidence="8">
    <conflict type="erroneous gene model prediction">
        <sequence resource="EMBL-CDS" id="BAB11067"/>
    </conflict>
</comment>
<protein>
    <recommendedName>
        <fullName evidence="8">Chaperone protein dnaJ GFA2, mitochondrial</fullName>
    </recommendedName>
    <alternativeName>
        <fullName evidence="6">Chaperone protein dnaJ A30</fullName>
        <shortName evidence="6">AtDjA30</shortName>
    </alternativeName>
    <alternativeName>
        <fullName evidence="7">Gametophytic factor 2</fullName>
    </alternativeName>
</protein>
<name>GFA2_ARATH</name>
<organism>
    <name type="scientific">Arabidopsis thaliana</name>
    <name type="common">Mouse-ear cress</name>
    <dbReference type="NCBI Taxonomy" id="3702"/>
    <lineage>
        <taxon>Eukaryota</taxon>
        <taxon>Viridiplantae</taxon>
        <taxon>Streptophyta</taxon>
        <taxon>Embryophyta</taxon>
        <taxon>Tracheophyta</taxon>
        <taxon>Spermatophyta</taxon>
        <taxon>Magnoliopsida</taxon>
        <taxon>eudicotyledons</taxon>
        <taxon>Gunneridae</taxon>
        <taxon>Pentapetalae</taxon>
        <taxon>rosids</taxon>
        <taxon>malvids</taxon>
        <taxon>Brassicales</taxon>
        <taxon>Brassicaceae</taxon>
        <taxon>Camelineae</taxon>
        <taxon>Arabidopsis</taxon>
    </lineage>
</organism>
<feature type="transit peptide" description="Mitochondrion" evidence="2">
    <location>
        <begin position="1"/>
        <end position="89"/>
    </location>
</feature>
<feature type="chain" id="PRO_0000435728" description="Chaperone protein dnaJ GFA2, mitochondrial" evidence="2">
    <location>
        <begin position="90"/>
        <end position="456"/>
    </location>
</feature>
<feature type="domain" description="J" evidence="3">
    <location>
        <begin position="94"/>
        <end position="159"/>
    </location>
</feature>
<feature type="repeat" description="CXXCXGXG motif" evidence="8">
    <location>
        <begin position="238"/>
        <end position="245"/>
    </location>
</feature>
<feature type="repeat" description="CXXCXGXG motif" evidence="8">
    <location>
        <begin position="255"/>
        <end position="262"/>
    </location>
</feature>
<feature type="repeat" description="CXXCXGXG motif" evidence="8">
    <location>
        <begin position="277"/>
        <end position="284"/>
    </location>
</feature>
<feature type="repeat" description="CXXCXGXG motif" evidence="8">
    <location>
        <begin position="291"/>
        <end position="298"/>
    </location>
</feature>
<feature type="zinc finger region" description="CR-type" evidence="4">
    <location>
        <begin position="225"/>
        <end position="303"/>
    </location>
</feature>
<feature type="binding site" evidence="1">
    <location>
        <position position="238"/>
    </location>
    <ligand>
        <name>Zn(2+)</name>
        <dbReference type="ChEBI" id="CHEBI:29105"/>
        <label>1</label>
    </ligand>
</feature>
<feature type="binding site" evidence="1">
    <location>
        <position position="241"/>
    </location>
    <ligand>
        <name>Zn(2+)</name>
        <dbReference type="ChEBI" id="CHEBI:29105"/>
        <label>1</label>
    </ligand>
</feature>
<feature type="binding site" evidence="1">
    <location>
        <position position="255"/>
    </location>
    <ligand>
        <name>Zn(2+)</name>
        <dbReference type="ChEBI" id="CHEBI:29105"/>
        <label>2</label>
    </ligand>
</feature>
<feature type="binding site" evidence="1">
    <location>
        <position position="258"/>
    </location>
    <ligand>
        <name>Zn(2+)</name>
        <dbReference type="ChEBI" id="CHEBI:29105"/>
        <label>2</label>
    </ligand>
</feature>
<feature type="binding site" evidence="1">
    <location>
        <position position="277"/>
    </location>
    <ligand>
        <name>Zn(2+)</name>
        <dbReference type="ChEBI" id="CHEBI:29105"/>
        <label>2</label>
    </ligand>
</feature>
<feature type="binding site" evidence="1">
    <location>
        <position position="280"/>
    </location>
    <ligand>
        <name>Zn(2+)</name>
        <dbReference type="ChEBI" id="CHEBI:29105"/>
        <label>2</label>
    </ligand>
</feature>
<feature type="binding site" evidence="1">
    <location>
        <position position="291"/>
    </location>
    <ligand>
        <name>Zn(2+)</name>
        <dbReference type="ChEBI" id="CHEBI:29105"/>
        <label>1</label>
    </ligand>
</feature>
<feature type="binding site" evidence="1">
    <location>
        <position position="294"/>
    </location>
    <ligand>
        <name>Zn(2+)</name>
        <dbReference type="ChEBI" id="CHEBI:29105"/>
        <label>1</label>
    </ligand>
</feature>
<feature type="sequence conflict" description="In Ref. 5; AAM62460." evidence="8" ref="5">
    <original>K</original>
    <variation>R</variation>
    <location>
        <position position="30"/>
    </location>
</feature>
<feature type="sequence conflict" description="In Ref. 5; AAM62460." evidence="8" ref="5">
    <original>D</original>
    <variation>H</variation>
    <location>
        <position position="63"/>
    </location>
</feature>
<feature type="sequence conflict" description="In Ref. 5; AAM62460." evidence="8" ref="5">
    <original>V</original>
    <variation>F</variation>
    <location>
        <position position="158"/>
    </location>
</feature>
<feature type="sequence conflict" description="In Ref. 5; AAM62460." evidence="8" ref="5">
    <original>D</original>
    <variation>Y</variation>
    <location>
        <position position="174"/>
    </location>
</feature>
<feature type="sequence conflict" description="In Ref. 1; AAM49801." evidence="8" ref="1">
    <original>E</original>
    <variation>Q</variation>
    <location>
        <position position="235"/>
    </location>
</feature>
<feature type="sequence conflict" description="In Ref. 5; AAM62460." evidence="8" ref="5">
    <original>T</original>
    <variation>N</variation>
    <location>
        <position position="309"/>
    </location>
</feature>
<dbReference type="EMBL" id="AY103490">
    <property type="protein sequence ID" value="AAM49801.1"/>
    <property type="molecule type" value="mRNA"/>
</dbReference>
<dbReference type="EMBL" id="AB017064">
    <property type="protein sequence ID" value="BAB11067.1"/>
    <property type="status" value="ALT_SEQ"/>
    <property type="molecule type" value="Genomic_DNA"/>
</dbReference>
<dbReference type="EMBL" id="CP002688">
    <property type="protein sequence ID" value="AED95612.1"/>
    <property type="molecule type" value="Genomic_DNA"/>
</dbReference>
<dbReference type="EMBL" id="AK118588">
    <property type="protein sequence ID" value="BAC43188.1"/>
    <property type="molecule type" value="mRNA"/>
</dbReference>
<dbReference type="EMBL" id="AY085227">
    <property type="protein sequence ID" value="AAM62460.1"/>
    <property type="molecule type" value="mRNA"/>
</dbReference>
<dbReference type="RefSeq" id="NP_568690.1">
    <property type="nucleotide sequence ID" value="NM_124177.4"/>
</dbReference>
<dbReference type="SMR" id="Q8GWW8"/>
<dbReference type="FunCoup" id="Q8GWW8">
    <property type="interactions" value="3669"/>
</dbReference>
<dbReference type="STRING" id="3702.Q8GWW8"/>
<dbReference type="SwissPalm" id="Q8GWW8"/>
<dbReference type="PaxDb" id="3702-AT5G48030.1"/>
<dbReference type="ProteomicsDB" id="220736"/>
<dbReference type="EnsemblPlants" id="AT5G48030.1">
    <property type="protein sequence ID" value="AT5G48030.1"/>
    <property type="gene ID" value="AT5G48030"/>
</dbReference>
<dbReference type="GeneID" id="834854"/>
<dbReference type="Gramene" id="AT5G48030.1">
    <property type="protein sequence ID" value="AT5G48030.1"/>
    <property type="gene ID" value="AT5G48030"/>
</dbReference>
<dbReference type="KEGG" id="ath:AT5G48030"/>
<dbReference type="Araport" id="AT5G48030"/>
<dbReference type="TAIR" id="AT5G48030">
    <property type="gene designation" value="GFA2"/>
</dbReference>
<dbReference type="eggNOG" id="KOG0715">
    <property type="taxonomic scope" value="Eukaryota"/>
</dbReference>
<dbReference type="HOGENOM" id="CLU_017633_0_3_1"/>
<dbReference type="InParanoid" id="Q8GWW8"/>
<dbReference type="OMA" id="QDLQYRM"/>
<dbReference type="OrthoDB" id="10256793at2759"/>
<dbReference type="PhylomeDB" id="Q8GWW8"/>
<dbReference type="CD-CODE" id="4299E36E">
    <property type="entry name" value="Nucleolus"/>
</dbReference>
<dbReference type="PRO" id="PR:Q8GWW8"/>
<dbReference type="Proteomes" id="UP000006548">
    <property type="component" value="Chromosome 5"/>
</dbReference>
<dbReference type="ExpressionAtlas" id="Q8GWW8">
    <property type="expression patterns" value="baseline and differential"/>
</dbReference>
<dbReference type="GO" id="GO:0005739">
    <property type="term" value="C:mitochondrion"/>
    <property type="evidence" value="ECO:0000314"/>
    <property type="project" value="TAIR"/>
</dbReference>
<dbReference type="GO" id="GO:0005524">
    <property type="term" value="F:ATP binding"/>
    <property type="evidence" value="ECO:0007669"/>
    <property type="project" value="InterPro"/>
</dbReference>
<dbReference type="GO" id="GO:0031072">
    <property type="term" value="F:heat shock protein binding"/>
    <property type="evidence" value="ECO:0007669"/>
    <property type="project" value="InterPro"/>
</dbReference>
<dbReference type="GO" id="GO:0051082">
    <property type="term" value="F:unfolded protein binding"/>
    <property type="evidence" value="ECO:0007669"/>
    <property type="project" value="InterPro"/>
</dbReference>
<dbReference type="GO" id="GO:0008270">
    <property type="term" value="F:zinc ion binding"/>
    <property type="evidence" value="ECO:0007669"/>
    <property type="project" value="UniProtKB-KW"/>
</dbReference>
<dbReference type="GO" id="GO:0051085">
    <property type="term" value="P:chaperone cofactor-dependent protein refolding"/>
    <property type="evidence" value="ECO:0000316"/>
    <property type="project" value="TAIR"/>
</dbReference>
<dbReference type="GO" id="GO:0009558">
    <property type="term" value="P:embryo sac cellularization"/>
    <property type="evidence" value="ECO:0000315"/>
    <property type="project" value="TAIR"/>
</dbReference>
<dbReference type="GO" id="GO:0009553">
    <property type="term" value="P:embryo sac development"/>
    <property type="evidence" value="ECO:0000315"/>
    <property type="project" value="TAIR"/>
</dbReference>
<dbReference type="GO" id="GO:0000740">
    <property type="term" value="P:nuclear membrane fusion"/>
    <property type="evidence" value="ECO:0000315"/>
    <property type="project" value="TAIR"/>
</dbReference>
<dbReference type="GO" id="GO:0010197">
    <property type="term" value="P:polar nucleus fusion"/>
    <property type="evidence" value="ECO:0000315"/>
    <property type="project" value="TAIR"/>
</dbReference>
<dbReference type="GO" id="GO:0009408">
    <property type="term" value="P:response to heat"/>
    <property type="evidence" value="ECO:0007669"/>
    <property type="project" value="InterPro"/>
</dbReference>
<dbReference type="GO" id="GO:0010198">
    <property type="term" value="P:synergid death"/>
    <property type="evidence" value="ECO:0000315"/>
    <property type="project" value="TAIR"/>
</dbReference>
<dbReference type="CDD" id="cd06257">
    <property type="entry name" value="DnaJ"/>
    <property type="match status" value="1"/>
</dbReference>
<dbReference type="CDD" id="cd10747">
    <property type="entry name" value="DnaJ_C"/>
    <property type="match status" value="1"/>
</dbReference>
<dbReference type="CDD" id="cd10719">
    <property type="entry name" value="DnaJ_zf"/>
    <property type="match status" value="1"/>
</dbReference>
<dbReference type="FunFam" id="2.60.260.20:FF:000005">
    <property type="entry name" value="Chaperone protein dnaJ 1, mitochondrial"/>
    <property type="match status" value="1"/>
</dbReference>
<dbReference type="FunFam" id="1.10.287.110:FF:000058">
    <property type="entry name" value="Chaperone protein dnaJ GFA2, mitochondrial"/>
    <property type="match status" value="1"/>
</dbReference>
<dbReference type="FunFam" id="2.10.230.10:FF:000002">
    <property type="entry name" value="Molecular chaperone DnaJ"/>
    <property type="match status" value="1"/>
</dbReference>
<dbReference type="Gene3D" id="1.10.287.110">
    <property type="entry name" value="DnaJ domain"/>
    <property type="match status" value="1"/>
</dbReference>
<dbReference type="Gene3D" id="2.10.230.10">
    <property type="entry name" value="Heat shock protein DnaJ, cysteine-rich domain"/>
    <property type="match status" value="1"/>
</dbReference>
<dbReference type="Gene3D" id="2.60.260.20">
    <property type="entry name" value="Urease metallochaperone UreE, N-terminal domain"/>
    <property type="match status" value="2"/>
</dbReference>
<dbReference type="HAMAP" id="MF_01152">
    <property type="entry name" value="DnaJ"/>
    <property type="match status" value="1"/>
</dbReference>
<dbReference type="InterPro" id="IPR012724">
    <property type="entry name" value="DnaJ"/>
</dbReference>
<dbReference type="InterPro" id="IPR002939">
    <property type="entry name" value="DnaJ_C"/>
</dbReference>
<dbReference type="InterPro" id="IPR001623">
    <property type="entry name" value="DnaJ_domain"/>
</dbReference>
<dbReference type="InterPro" id="IPR018253">
    <property type="entry name" value="DnaJ_domain_CS"/>
</dbReference>
<dbReference type="InterPro" id="IPR008971">
    <property type="entry name" value="HSP40/DnaJ_pept-bd"/>
</dbReference>
<dbReference type="InterPro" id="IPR001305">
    <property type="entry name" value="HSP_DnaJ_Cys-rich_dom"/>
</dbReference>
<dbReference type="InterPro" id="IPR036410">
    <property type="entry name" value="HSP_DnaJ_Cys-rich_dom_sf"/>
</dbReference>
<dbReference type="InterPro" id="IPR036869">
    <property type="entry name" value="J_dom_sf"/>
</dbReference>
<dbReference type="NCBIfam" id="NF008035">
    <property type="entry name" value="PRK10767.1"/>
    <property type="match status" value="1"/>
</dbReference>
<dbReference type="PANTHER" id="PTHR43096">
    <property type="entry name" value="DNAJ HOMOLOG 1, MITOCHONDRIAL-RELATED"/>
    <property type="match status" value="1"/>
</dbReference>
<dbReference type="PANTHER" id="PTHR43096:SF52">
    <property type="entry name" value="DNAJ HOMOLOG 1, MITOCHONDRIAL-RELATED"/>
    <property type="match status" value="1"/>
</dbReference>
<dbReference type="Pfam" id="PF00226">
    <property type="entry name" value="DnaJ"/>
    <property type="match status" value="1"/>
</dbReference>
<dbReference type="Pfam" id="PF01556">
    <property type="entry name" value="DnaJ_C"/>
    <property type="match status" value="1"/>
</dbReference>
<dbReference type="Pfam" id="PF00684">
    <property type="entry name" value="DnaJ_CXXCXGXG"/>
    <property type="match status" value="1"/>
</dbReference>
<dbReference type="PRINTS" id="PR00625">
    <property type="entry name" value="JDOMAIN"/>
</dbReference>
<dbReference type="SMART" id="SM00271">
    <property type="entry name" value="DnaJ"/>
    <property type="match status" value="1"/>
</dbReference>
<dbReference type="SUPFAM" id="SSF46565">
    <property type="entry name" value="Chaperone J-domain"/>
    <property type="match status" value="1"/>
</dbReference>
<dbReference type="SUPFAM" id="SSF57938">
    <property type="entry name" value="DnaJ/Hsp40 cysteine-rich domain"/>
    <property type="match status" value="1"/>
</dbReference>
<dbReference type="SUPFAM" id="SSF49493">
    <property type="entry name" value="HSP40/DnaJ peptide-binding domain"/>
    <property type="match status" value="2"/>
</dbReference>
<dbReference type="PROSITE" id="PS00636">
    <property type="entry name" value="DNAJ_1"/>
    <property type="match status" value="1"/>
</dbReference>
<dbReference type="PROSITE" id="PS50076">
    <property type="entry name" value="DNAJ_2"/>
    <property type="match status" value="1"/>
</dbReference>
<dbReference type="PROSITE" id="PS51188">
    <property type="entry name" value="ZF_CR"/>
    <property type="match status" value="1"/>
</dbReference>
<evidence type="ECO:0000250" key="1">
    <source>
        <dbReference type="UniProtKB" id="Q96EY1"/>
    </source>
</evidence>
<evidence type="ECO:0000255" key="2"/>
<evidence type="ECO:0000255" key="3">
    <source>
        <dbReference type="PROSITE-ProRule" id="PRU00286"/>
    </source>
</evidence>
<evidence type="ECO:0000255" key="4">
    <source>
        <dbReference type="PROSITE-ProRule" id="PRU00546"/>
    </source>
</evidence>
<evidence type="ECO:0000269" key="5">
    <source>
    </source>
</evidence>
<evidence type="ECO:0000303" key="6">
    <source>
    </source>
</evidence>
<evidence type="ECO:0000303" key="7">
    <source>
    </source>
</evidence>
<evidence type="ECO:0000305" key="8"/>
<evidence type="ECO:0000312" key="9">
    <source>
        <dbReference type="Araport" id="AT5G48030"/>
    </source>
</evidence>
<evidence type="ECO:0000312" key="10">
    <source>
        <dbReference type="EMBL" id="BAB11067.1"/>
    </source>
</evidence>
<accession>Q8GWW8</accession>
<accession>Q8L8A1</accession>
<accession>Q8LEU4</accession>
<accession>Q9FI35</accession>
<gene>
    <name evidence="7" type="primary">GFA2</name>
    <name evidence="9" type="ordered locus">At5g48030</name>
    <name evidence="10" type="ORF">MDN11.11</name>
</gene>
<keyword id="KW-0053">Apoptosis</keyword>
<keyword id="KW-0143">Chaperone</keyword>
<keyword id="KW-0479">Metal-binding</keyword>
<keyword id="KW-0496">Mitochondrion</keyword>
<keyword id="KW-1185">Reference proteome</keyword>
<keyword id="KW-0677">Repeat</keyword>
<keyword id="KW-0809">Transit peptide</keyword>
<keyword id="KW-0862">Zinc</keyword>
<keyword id="KW-0863">Zinc-finger</keyword>
<reference key="1">
    <citation type="journal article" date="2002" name="Plant Cell">
        <title>Mitochondrial GFA2 is required for synergid cell death in Arabidopsis.</title>
        <authorList>
            <person name="Christensen C.A."/>
            <person name="Gorsich S.W."/>
            <person name="Brown R.H."/>
            <person name="Jones L.G."/>
            <person name="Brown J."/>
            <person name="Shaw J.M."/>
            <person name="Drews G.N."/>
        </authorList>
    </citation>
    <scope>NUCLEOTIDE SEQUENCE [MRNA]</scope>
    <scope>FUNCTION</scope>
    <scope>SUBCELLULAR LOCATION</scope>
    <scope>TISSUE SPECIFICITY</scope>
    <scope>DISRUPTION PHENOTYPE</scope>
    <source>
        <strain>cv. Columbia</strain>
    </source>
</reference>
<reference key="2">
    <citation type="journal article" date="1999" name="DNA Res.">
        <title>Structural analysis of Arabidopsis thaliana chromosome 5. IX. Sequence features of the regions of 1,011,550 bp covered by seventeen P1 and TAC clones.</title>
        <authorList>
            <person name="Kaneko T."/>
            <person name="Katoh T."/>
            <person name="Sato S."/>
            <person name="Nakamura Y."/>
            <person name="Asamizu E."/>
            <person name="Kotani H."/>
            <person name="Miyajima N."/>
            <person name="Tabata S."/>
        </authorList>
    </citation>
    <scope>NUCLEOTIDE SEQUENCE [LARGE SCALE GENOMIC DNA]</scope>
    <source>
        <strain>cv. Columbia</strain>
    </source>
</reference>
<reference key="3">
    <citation type="journal article" date="2017" name="Plant J.">
        <title>Araport11: a complete reannotation of the Arabidopsis thaliana reference genome.</title>
        <authorList>
            <person name="Cheng C.Y."/>
            <person name="Krishnakumar V."/>
            <person name="Chan A.P."/>
            <person name="Thibaud-Nissen F."/>
            <person name="Schobel S."/>
            <person name="Town C.D."/>
        </authorList>
    </citation>
    <scope>GENOME REANNOTATION</scope>
    <source>
        <strain>cv. Columbia</strain>
    </source>
</reference>
<reference key="4">
    <citation type="journal article" date="2002" name="Science">
        <title>Functional annotation of a full-length Arabidopsis cDNA collection.</title>
        <authorList>
            <person name="Seki M."/>
            <person name="Narusaka M."/>
            <person name="Kamiya A."/>
            <person name="Ishida J."/>
            <person name="Satou M."/>
            <person name="Sakurai T."/>
            <person name="Nakajima M."/>
            <person name="Enju A."/>
            <person name="Akiyama K."/>
            <person name="Oono Y."/>
            <person name="Muramatsu M."/>
            <person name="Hayashizaki Y."/>
            <person name="Kawai J."/>
            <person name="Carninci P."/>
            <person name="Itoh M."/>
            <person name="Ishii Y."/>
            <person name="Arakawa T."/>
            <person name="Shibata K."/>
            <person name="Shinagawa A."/>
            <person name="Shinozaki K."/>
        </authorList>
    </citation>
    <scope>NUCLEOTIDE SEQUENCE [LARGE SCALE MRNA]</scope>
    <source>
        <strain>cv. Columbia</strain>
    </source>
</reference>
<reference key="5">
    <citation type="submission" date="2002-03" db="EMBL/GenBank/DDBJ databases">
        <title>Full-length cDNA from Arabidopsis thaliana.</title>
        <authorList>
            <person name="Brover V.V."/>
            <person name="Troukhan M.E."/>
            <person name="Alexandrov N.A."/>
            <person name="Lu Y.-P."/>
            <person name="Flavell R.B."/>
            <person name="Feldmann K.A."/>
        </authorList>
    </citation>
    <scope>NUCLEOTIDE SEQUENCE [LARGE SCALE MRNA]</scope>
</reference>
<reference key="6">
    <citation type="journal article" date="2001" name="Cell Stress Chaperones">
        <title>The J-domain proteins of Arabidopsis thaliana: an unexpectedly large and diverse family of chaperones.</title>
        <authorList>
            <person name="Miernyk J.A."/>
        </authorList>
    </citation>
    <scope>GENE FAMILY</scope>
    <scope>NOMENCLATURE</scope>
</reference>
<sequence length="456" mass="49438">MVPSNGAKVLRLLSRRCLSSSLIQDLANQKLRGVCIGSYRRLNTSVGNHANVIGDYASKSGHDRKWINFGGFNTNFGSTRSFHGTGSSFMSAKDYYSVLGVSKNAQEGEIKKAYYGLAKKLHPDMNKDDPEAETKFQEVSKAYEILKDKEKRDLYDQVGHEAFEQNASGGFPNDQGFGGGGGGGFNPFDIFGSFNGDIFNMYRQDIGGQDVKVLLDLSFMEAVQGCSKTVTFQTEMACNTCGGQGVPPGTKREKCKACNGSGMTSLRRGMLSIQTTCQKCGGAGQTFSSICKSCRGARVVRGQKSVKVTIDPGVDNSDTLKVARVGGADPEGDQPGDLYVTLKVREDPVFRREGSDIHVDAVLSVTQAILGGTIQVPTLTGDVVVKVRPGTQPGHKVVLRNKGIRARKSTKFGDQYVHFNVSIPANITQRQRELLEEFSKAEQGEYEQRTATGSSQ</sequence>
<proteinExistence type="evidence at transcript level"/>